<proteinExistence type="inferred from homology"/>
<protein>
    <recommendedName>
        <fullName evidence="1">Putative pre-16S rRNA nuclease</fullName>
        <ecNumber evidence="1">3.1.-.-</ecNumber>
    </recommendedName>
</protein>
<reference key="1">
    <citation type="journal article" date="2008" name="Appl. Environ. Microbiol.">
        <title>Genome of the epsilonproteobacterial chemolithoautotroph Sulfurimonas denitrificans.</title>
        <authorList>
            <person name="Sievert S.M."/>
            <person name="Scott K.M."/>
            <person name="Klotz M.G."/>
            <person name="Chain P.S.G."/>
            <person name="Hauser L.J."/>
            <person name="Hemp J."/>
            <person name="Huegler M."/>
            <person name="Land M."/>
            <person name="Lapidus A."/>
            <person name="Larimer F.W."/>
            <person name="Lucas S."/>
            <person name="Malfatti S.A."/>
            <person name="Meyer F."/>
            <person name="Paulsen I.T."/>
            <person name="Ren Q."/>
            <person name="Simon J."/>
            <person name="Bailey K."/>
            <person name="Diaz E."/>
            <person name="Fitzpatrick K.A."/>
            <person name="Glover B."/>
            <person name="Gwatney N."/>
            <person name="Korajkic A."/>
            <person name="Long A."/>
            <person name="Mobberley J.M."/>
            <person name="Pantry S.N."/>
            <person name="Pazder G."/>
            <person name="Peterson S."/>
            <person name="Quintanilla J.D."/>
            <person name="Sprinkle R."/>
            <person name="Stephens J."/>
            <person name="Thomas P."/>
            <person name="Vaughn R."/>
            <person name="Weber M.J."/>
            <person name="Wooten L.L."/>
        </authorList>
    </citation>
    <scope>NUCLEOTIDE SEQUENCE [LARGE SCALE GENOMIC DNA]</scope>
    <source>
        <strain>ATCC 33889 / DSM 1251</strain>
    </source>
</reference>
<accession>Q30T74</accession>
<sequence>MKYIAIDLGLKRIGLAYSAHKDLVTPLKAVERKNRDQAARDVKKTLIEWEVDAVVVGIPLGGSSEDEMRRRVAHFMNLVAFEGEIFYQDESNSSIEAESMMRGEIKYIRDGRIDSISAMIILQRYLRQKC</sequence>
<feature type="chain" id="PRO_0000257614" description="Putative pre-16S rRNA nuclease">
    <location>
        <begin position="1"/>
        <end position="130"/>
    </location>
</feature>
<evidence type="ECO:0000255" key="1">
    <source>
        <dbReference type="HAMAP-Rule" id="MF_00651"/>
    </source>
</evidence>
<name>YQGF_SULDN</name>
<organism>
    <name type="scientific">Sulfurimonas denitrificans (strain ATCC 33889 / DSM 1251)</name>
    <name type="common">Thiomicrospira denitrificans (strain ATCC 33889 / DSM 1251)</name>
    <dbReference type="NCBI Taxonomy" id="326298"/>
    <lineage>
        <taxon>Bacteria</taxon>
        <taxon>Pseudomonadati</taxon>
        <taxon>Campylobacterota</taxon>
        <taxon>Epsilonproteobacteria</taxon>
        <taxon>Campylobacterales</taxon>
        <taxon>Sulfurimonadaceae</taxon>
        <taxon>Sulfurimonas</taxon>
    </lineage>
</organism>
<gene>
    <name type="ordered locus">Suden_0527</name>
</gene>
<keyword id="KW-0963">Cytoplasm</keyword>
<keyword id="KW-0378">Hydrolase</keyword>
<keyword id="KW-0540">Nuclease</keyword>
<keyword id="KW-1185">Reference proteome</keyword>
<keyword id="KW-0690">Ribosome biogenesis</keyword>
<dbReference type="EC" id="3.1.-.-" evidence="1"/>
<dbReference type="EMBL" id="CP000153">
    <property type="protein sequence ID" value="ABB43807.1"/>
    <property type="molecule type" value="Genomic_DNA"/>
</dbReference>
<dbReference type="RefSeq" id="WP_011372161.1">
    <property type="nucleotide sequence ID" value="NC_007575.1"/>
</dbReference>
<dbReference type="SMR" id="Q30T74"/>
<dbReference type="STRING" id="326298.Suden_0527"/>
<dbReference type="KEGG" id="tdn:Suden_0527"/>
<dbReference type="eggNOG" id="COG0816">
    <property type="taxonomic scope" value="Bacteria"/>
</dbReference>
<dbReference type="HOGENOM" id="CLU_098240_2_2_7"/>
<dbReference type="OrthoDB" id="9796140at2"/>
<dbReference type="Proteomes" id="UP000002714">
    <property type="component" value="Chromosome"/>
</dbReference>
<dbReference type="GO" id="GO:0005829">
    <property type="term" value="C:cytosol"/>
    <property type="evidence" value="ECO:0007669"/>
    <property type="project" value="TreeGrafter"/>
</dbReference>
<dbReference type="GO" id="GO:0004518">
    <property type="term" value="F:nuclease activity"/>
    <property type="evidence" value="ECO:0007669"/>
    <property type="project" value="UniProtKB-KW"/>
</dbReference>
<dbReference type="GO" id="GO:0000967">
    <property type="term" value="P:rRNA 5'-end processing"/>
    <property type="evidence" value="ECO:0007669"/>
    <property type="project" value="UniProtKB-UniRule"/>
</dbReference>
<dbReference type="CDD" id="cd16964">
    <property type="entry name" value="YqgF"/>
    <property type="match status" value="1"/>
</dbReference>
<dbReference type="Gene3D" id="3.30.420.140">
    <property type="entry name" value="YqgF/RNase H-like domain"/>
    <property type="match status" value="1"/>
</dbReference>
<dbReference type="HAMAP" id="MF_00651">
    <property type="entry name" value="Nuclease_YqgF"/>
    <property type="match status" value="1"/>
</dbReference>
<dbReference type="InterPro" id="IPR012337">
    <property type="entry name" value="RNaseH-like_sf"/>
</dbReference>
<dbReference type="InterPro" id="IPR005227">
    <property type="entry name" value="YqgF"/>
</dbReference>
<dbReference type="InterPro" id="IPR006641">
    <property type="entry name" value="YqgF/RNaseH-like_dom"/>
</dbReference>
<dbReference type="InterPro" id="IPR037027">
    <property type="entry name" value="YqgF/RNaseH-like_dom_sf"/>
</dbReference>
<dbReference type="NCBIfam" id="NF001026">
    <property type="entry name" value="PRK00109.2-2"/>
    <property type="match status" value="1"/>
</dbReference>
<dbReference type="NCBIfam" id="TIGR00250">
    <property type="entry name" value="RNAse_H_YqgF"/>
    <property type="match status" value="1"/>
</dbReference>
<dbReference type="PANTHER" id="PTHR33317">
    <property type="entry name" value="POLYNUCLEOTIDYL TRANSFERASE, RIBONUCLEASE H-LIKE SUPERFAMILY PROTEIN"/>
    <property type="match status" value="1"/>
</dbReference>
<dbReference type="PANTHER" id="PTHR33317:SF4">
    <property type="entry name" value="POLYNUCLEOTIDYL TRANSFERASE, RIBONUCLEASE H-LIKE SUPERFAMILY PROTEIN"/>
    <property type="match status" value="1"/>
</dbReference>
<dbReference type="Pfam" id="PF03652">
    <property type="entry name" value="RuvX"/>
    <property type="match status" value="1"/>
</dbReference>
<dbReference type="SMART" id="SM00732">
    <property type="entry name" value="YqgFc"/>
    <property type="match status" value="1"/>
</dbReference>
<dbReference type="SUPFAM" id="SSF53098">
    <property type="entry name" value="Ribonuclease H-like"/>
    <property type="match status" value="1"/>
</dbReference>
<comment type="function">
    <text evidence="1">Could be a nuclease involved in processing of the 5'-end of pre-16S rRNA.</text>
</comment>
<comment type="subcellular location">
    <subcellularLocation>
        <location evidence="1">Cytoplasm</location>
    </subcellularLocation>
</comment>
<comment type="similarity">
    <text evidence="1">Belongs to the YqgF nuclease family.</text>
</comment>